<dbReference type="EC" id="5.4.2.12" evidence="1"/>
<dbReference type="EMBL" id="CP000753">
    <property type="protein sequence ID" value="ABS06216.1"/>
    <property type="molecule type" value="Genomic_DNA"/>
</dbReference>
<dbReference type="RefSeq" id="WP_011982007.1">
    <property type="nucleotide sequence ID" value="NC_009665.1"/>
</dbReference>
<dbReference type="SMR" id="A6WHC7"/>
<dbReference type="KEGG" id="sbm:Shew185_0043"/>
<dbReference type="HOGENOM" id="CLU_026099_2_0_6"/>
<dbReference type="UniPathway" id="UPA00109">
    <property type="reaction ID" value="UER00186"/>
</dbReference>
<dbReference type="GO" id="GO:0005829">
    <property type="term" value="C:cytosol"/>
    <property type="evidence" value="ECO:0007669"/>
    <property type="project" value="TreeGrafter"/>
</dbReference>
<dbReference type="GO" id="GO:0030145">
    <property type="term" value="F:manganese ion binding"/>
    <property type="evidence" value="ECO:0007669"/>
    <property type="project" value="UniProtKB-UniRule"/>
</dbReference>
<dbReference type="GO" id="GO:0004619">
    <property type="term" value="F:phosphoglycerate mutase activity"/>
    <property type="evidence" value="ECO:0007669"/>
    <property type="project" value="UniProtKB-EC"/>
</dbReference>
<dbReference type="GO" id="GO:0006007">
    <property type="term" value="P:glucose catabolic process"/>
    <property type="evidence" value="ECO:0007669"/>
    <property type="project" value="InterPro"/>
</dbReference>
<dbReference type="GO" id="GO:0006096">
    <property type="term" value="P:glycolytic process"/>
    <property type="evidence" value="ECO:0007669"/>
    <property type="project" value="UniProtKB-UniRule"/>
</dbReference>
<dbReference type="CDD" id="cd16010">
    <property type="entry name" value="iPGM"/>
    <property type="match status" value="1"/>
</dbReference>
<dbReference type="FunFam" id="3.40.1450.10:FF:000001">
    <property type="entry name" value="2,3-bisphosphoglycerate-independent phosphoglycerate mutase"/>
    <property type="match status" value="1"/>
</dbReference>
<dbReference type="FunFam" id="3.40.720.10:FF:000001">
    <property type="entry name" value="2,3-bisphosphoglycerate-independent phosphoglycerate mutase"/>
    <property type="match status" value="1"/>
</dbReference>
<dbReference type="Gene3D" id="3.40.720.10">
    <property type="entry name" value="Alkaline Phosphatase, subunit A"/>
    <property type="match status" value="1"/>
</dbReference>
<dbReference type="Gene3D" id="3.40.1450.10">
    <property type="entry name" value="BPG-independent phosphoglycerate mutase, domain B"/>
    <property type="match status" value="1"/>
</dbReference>
<dbReference type="HAMAP" id="MF_01038">
    <property type="entry name" value="GpmI"/>
    <property type="match status" value="1"/>
</dbReference>
<dbReference type="InterPro" id="IPR017850">
    <property type="entry name" value="Alkaline_phosphatase_core_sf"/>
</dbReference>
<dbReference type="InterPro" id="IPR011258">
    <property type="entry name" value="BPG-indep_PGM_N"/>
</dbReference>
<dbReference type="InterPro" id="IPR006124">
    <property type="entry name" value="Metalloenzyme"/>
</dbReference>
<dbReference type="InterPro" id="IPR036646">
    <property type="entry name" value="PGAM_B_sf"/>
</dbReference>
<dbReference type="InterPro" id="IPR005995">
    <property type="entry name" value="Pgm_bpd_ind"/>
</dbReference>
<dbReference type="NCBIfam" id="TIGR01307">
    <property type="entry name" value="pgm_bpd_ind"/>
    <property type="match status" value="1"/>
</dbReference>
<dbReference type="NCBIfam" id="NF003897">
    <property type="entry name" value="PRK05434.1-5"/>
    <property type="match status" value="1"/>
</dbReference>
<dbReference type="PANTHER" id="PTHR31637">
    <property type="entry name" value="2,3-BISPHOSPHOGLYCERATE-INDEPENDENT PHOSPHOGLYCERATE MUTASE"/>
    <property type="match status" value="1"/>
</dbReference>
<dbReference type="PANTHER" id="PTHR31637:SF0">
    <property type="entry name" value="2,3-BISPHOSPHOGLYCERATE-INDEPENDENT PHOSPHOGLYCERATE MUTASE"/>
    <property type="match status" value="1"/>
</dbReference>
<dbReference type="Pfam" id="PF06415">
    <property type="entry name" value="iPGM_N"/>
    <property type="match status" value="1"/>
</dbReference>
<dbReference type="Pfam" id="PF01676">
    <property type="entry name" value="Metalloenzyme"/>
    <property type="match status" value="1"/>
</dbReference>
<dbReference type="PIRSF" id="PIRSF001492">
    <property type="entry name" value="IPGAM"/>
    <property type="match status" value="1"/>
</dbReference>
<dbReference type="SUPFAM" id="SSF64158">
    <property type="entry name" value="2,3-Bisphosphoglycerate-independent phosphoglycerate mutase, substrate-binding domain"/>
    <property type="match status" value="1"/>
</dbReference>
<dbReference type="SUPFAM" id="SSF53649">
    <property type="entry name" value="Alkaline phosphatase-like"/>
    <property type="match status" value="1"/>
</dbReference>
<keyword id="KW-0324">Glycolysis</keyword>
<keyword id="KW-0413">Isomerase</keyword>
<keyword id="KW-0464">Manganese</keyword>
<keyword id="KW-0479">Metal-binding</keyword>
<proteinExistence type="inferred from homology"/>
<comment type="function">
    <text evidence="1">Catalyzes the interconversion of 2-phosphoglycerate and 3-phosphoglycerate.</text>
</comment>
<comment type="catalytic activity">
    <reaction evidence="1">
        <text>(2R)-2-phosphoglycerate = (2R)-3-phosphoglycerate</text>
        <dbReference type="Rhea" id="RHEA:15901"/>
        <dbReference type="ChEBI" id="CHEBI:58272"/>
        <dbReference type="ChEBI" id="CHEBI:58289"/>
        <dbReference type="EC" id="5.4.2.12"/>
    </reaction>
</comment>
<comment type="cofactor">
    <cofactor evidence="1">
        <name>Mn(2+)</name>
        <dbReference type="ChEBI" id="CHEBI:29035"/>
    </cofactor>
    <text evidence="1">Binds 2 manganese ions per subunit.</text>
</comment>
<comment type="pathway">
    <text evidence="1">Carbohydrate degradation; glycolysis; pyruvate from D-glyceraldehyde 3-phosphate: step 3/5.</text>
</comment>
<comment type="subunit">
    <text evidence="1">Monomer.</text>
</comment>
<comment type="similarity">
    <text evidence="1">Belongs to the BPG-independent phosphoglycerate mutase family.</text>
</comment>
<evidence type="ECO:0000255" key="1">
    <source>
        <dbReference type="HAMAP-Rule" id="MF_01038"/>
    </source>
</evidence>
<name>GPMI_SHEB8</name>
<sequence>MTTAKRPLALLILDGWGYRENTHNNAIFHANTPVLDRLNAQYPHSLISGSGLDVGLPDGQMGNSEVGHINLGSGRVVYQELTRISKAIADHEFEQNPALCDAVDSAIKAGGAVHIMGLLSAGGVHSHEEHIEAMCRMAVARGATKVYLHAFLDGRDTPPRSAKTSLSHFDDLFTTLGHGRIASIIGRYFAMDRDNRWDRVSQAYDLITQGKSKFQYDNAVTALEAAYERNENDEFVSSSAITDADGQVATLQDGDALIFMNFRADRARQITRSFINPDFDGFERAVVPKMHFVTLTEYAGDIKAPIAYPSENLVNTLGEVLQKQGRTQLRISETEKYAHVTFFFNGGKEEPFEGEDRILINSPKVATYDLQPEMSSAELTDKLVAAIESTKYDVIICNYPNGDMVGHTGNFDAAVKACEAVDACIGRVVDALAKVGGECIITADHGNAEQMTDETTGQAHTAHTSELVPFVFVGRNATIDEGGKLSDVAPTILTLIGEAIPAEMTGKPLIHIKE</sequence>
<feature type="chain" id="PRO_1000064002" description="2,3-bisphosphoglycerate-independent phosphoglycerate mutase">
    <location>
        <begin position="1"/>
        <end position="514"/>
    </location>
</feature>
<feature type="active site" description="Phosphoserine intermediate" evidence="1">
    <location>
        <position position="64"/>
    </location>
</feature>
<feature type="binding site" evidence="1">
    <location>
        <position position="14"/>
    </location>
    <ligand>
        <name>Mn(2+)</name>
        <dbReference type="ChEBI" id="CHEBI:29035"/>
        <label>2</label>
    </ligand>
</feature>
<feature type="binding site" evidence="1">
    <location>
        <position position="64"/>
    </location>
    <ligand>
        <name>Mn(2+)</name>
        <dbReference type="ChEBI" id="CHEBI:29035"/>
        <label>2</label>
    </ligand>
</feature>
<feature type="binding site" evidence="1">
    <location>
        <position position="125"/>
    </location>
    <ligand>
        <name>substrate</name>
    </ligand>
</feature>
<feature type="binding site" evidence="1">
    <location>
        <begin position="155"/>
        <end position="156"/>
    </location>
    <ligand>
        <name>substrate</name>
    </ligand>
</feature>
<feature type="binding site" evidence="1">
    <location>
        <position position="187"/>
    </location>
    <ligand>
        <name>substrate</name>
    </ligand>
</feature>
<feature type="binding site" evidence="1">
    <location>
        <position position="193"/>
    </location>
    <ligand>
        <name>substrate</name>
    </ligand>
</feature>
<feature type="binding site" evidence="1">
    <location>
        <begin position="263"/>
        <end position="266"/>
    </location>
    <ligand>
        <name>substrate</name>
    </ligand>
</feature>
<feature type="binding site" evidence="1">
    <location>
        <position position="336"/>
    </location>
    <ligand>
        <name>substrate</name>
    </ligand>
</feature>
<feature type="binding site" evidence="1">
    <location>
        <position position="403"/>
    </location>
    <ligand>
        <name>Mn(2+)</name>
        <dbReference type="ChEBI" id="CHEBI:29035"/>
        <label>1</label>
    </ligand>
</feature>
<feature type="binding site" evidence="1">
    <location>
        <position position="407"/>
    </location>
    <ligand>
        <name>Mn(2+)</name>
        <dbReference type="ChEBI" id="CHEBI:29035"/>
        <label>1</label>
    </ligand>
</feature>
<feature type="binding site" evidence="1">
    <location>
        <position position="444"/>
    </location>
    <ligand>
        <name>Mn(2+)</name>
        <dbReference type="ChEBI" id="CHEBI:29035"/>
        <label>2</label>
    </ligand>
</feature>
<feature type="binding site" evidence="1">
    <location>
        <position position="445"/>
    </location>
    <ligand>
        <name>Mn(2+)</name>
        <dbReference type="ChEBI" id="CHEBI:29035"/>
        <label>2</label>
    </ligand>
</feature>
<feature type="binding site" evidence="1">
    <location>
        <position position="463"/>
    </location>
    <ligand>
        <name>Mn(2+)</name>
        <dbReference type="ChEBI" id="CHEBI:29035"/>
        <label>1</label>
    </ligand>
</feature>
<reference key="1">
    <citation type="submission" date="2007-07" db="EMBL/GenBank/DDBJ databases">
        <title>Complete sequence of chromosome of Shewanella baltica OS185.</title>
        <authorList>
            <consortium name="US DOE Joint Genome Institute"/>
            <person name="Copeland A."/>
            <person name="Lucas S."/>
            <person name="Lapidus A."/>
            <person name="Barry K."/>
            <person name="Glavina del Rio T."/>
            <person name="Dalin E."/>
            <person name="Tice H."/>
            <person name="Pitluck S."/>
            <person name="Sims D."/>
            <person name="Brettin T."/>
            <person name="Bruce D."/>
            <person name="Detter J.C."/>
            <person name="Han C."/>
            <person name="Schmutz J."/>
            <person name="Larimer F."/>
            <person name="Land M."/>
            <person name="Hauser L."/>
            <person name="Kyrpides N."/>
            <person name="Mikhailova N."/>
            <person name="Brettar I."/>
            <person name="Rodrigues J."/>
            <person name="Konstantinidis K."/>
            <person name="Tiedje J."/>
            <person name="Richardson P."/>
        </authorList>
    </citation>
    <scope>NUCLEOTIDE SEQUENCE [LARGE SCALE GENOMIC DNA]</scope>
    <source>
        <strain>OS185</strain>
    </source>
</reference>
<organism>
    <name type="scientific">Shewanella baltica (strain OS185)</name>
    <dbReference type="NCBI Taxonomy" id="402882"/>
    <lineage>
        <taxon>Bacteria</taxon>
        <taxon>Pseudomonadati</taxon>
        <taxon>Pseudomonadota</taxon>
        <taxon>Gammaproteobacteria</taxon>
        <taxon>Alteromonadales</taxon>
        <taxon>Shewanellaceae</taxon>
        <taxon>Shewanella</taxon>
    </lineage>
</organism>
<accession>A6WHC7</accession>
<protein>
    <recommendedName>
        <fullName evidence="1">2,3-bisphosphoglycerate-independent phosphoglycerate mutase</fullName>
        <shortName evidence="1">BPG-independent PGAM</shortName>
        <shortName evidence="1">Phosphoglyceromutase</shortName>
        <shortName evidence="1">iPGM</shortName>
        <ecNumber evidence="1">5.4.2.12</ecNumber>
    </recommendedName>
</protein>
<gene>
    <name evidence="1" type="primary">gpmI</name>
    <name type="ordered locus">Shew185_0043</name>
</gene>